<organism>
    <name type="scientific">Rattus norvegicus</name>
    <name type="common">Rat</name>
    <dbReference type="NCBI Taxonomy" id="10116"/>
    <lineage>
        <taxon>Eukaryota</taxon>
        <taxon>Metazoa</taxon>
        <taxon>Chordata</taxon>
        <taxon>Craniata</taxon>
        <taxon>Vertebrata</taxon>
        <taxon>Euteleostomi</taxon>
        <taxon>Mammalia</taxon>
        <taxon>Eutheria</taxon>
        <taxon>Euarchontoglires</taxon>
        <taxon>Glires</taxon>
        <taxon>Rodentia</taxon>
        <taxon>Myomorpha</taxon>
        <taxon>Muroidea</taxon>
        <taxon>Muridae</taxon>
        <taxon>Murinae</taxon>
        <taxon>Rattus</taxon>
    </lineage>
</organism>
<proteinExistence type="evidence at protein level"/>
<sequence>MADYLISGGTSYVPDDGLTAQQLFNCGDGLTYNDFLILPGYIDFTADQVDLTSALTKKITLKTPLVSSPMDTVTEAGMAIAMALTGGIGFIHHNCTPEFQANEVRKVKKYEQGFITDPVVLSPKDRVRDVFEAKARHGFCGIPITDTGRMGSRLVGIISSRDIDFLKEEEHDRFLEEIMTKREDLVVAPAGVTLKEANEILQRSKKGKLPIVNESDELVAIIARTDLKKNRDYPLASKDTKKQLLCGAAIGTHEDDKYRLDLLALAGVDVVVLDSSQGNSIFQINMIKYIKEKYPNLQVIGGNVVTAAQAKNLIDAGVDALRVGMGSGSICITQEVLACGRPQATAVYKVSEYARRFGVPVIADGGIQNVGHIAKALALGASTVMMGSLLAATTEAPGEYFFSDGIRLKKYRGMGSLDAMDKHLSSQNRYFSEADKIKVAQGVSGAVQDKGSIHKFVPYLIAGIQHSCQDIGAKSLTQVRAMMYSGELKFEKRTSSAQVEGGVHGLHSYEKRLF</sequence>
<evidence type="ECO:0000250" key="1">
    <source>
        <dbReference type="UniProtKB" id="P12268"/>
    </source>
</evidence>
<evidence type="ECO:0000255" key="2">
    <source>
        <dbReference type="HAMAP-Rule" id="MF_03156"/>
    </source>
</evidence>
<evidence type="ECO:0007744" key="3">
    <source>
    </source>
</evidence>
<comment type="function">
    <text evidence="1">Catalyzes the conversion of inosine 5'-phosphate (IMP) to xanthosine 5'-phosphate (XMP), the first committed and rate-limiting step in the de novo synthesis of guanine nucleotides, and therefore plays an important role in the regulation of cell growth. Could also have a single-stranded nucleic acid-binding activity and could play a role in RNA and/or DNA metabolism. It may also have a role in the development of malignancy and the growth progression of some tumors.</text>
</comment>
<comment type="catalytic activity">
    <reaction evidence="1">
        <text>IMP + NAD(+) + H2O = XMP + NADH + H(+)</text>
        <dbReference type="Rhea" id="RHEA:11708"/>
        <dbReference type="ChEBI" id="CHEBI:15377"/>
        <dbReference type="ChEBI" id="CHEBI:15378"/>
        <dbReference type="ChEBI" id="CHEBI:57464"/>
        <dbReference type="ChEBI" id="CHEBI:57540"/>
        <dbReference type="ChEBI" id="CHEBI:57945"/>
        <dbReference type="ChEBI" id="CHEBI:58053"/>
        <dbReference type="EC" id="1.1.1.205"/>
    </reaction>
</comment>
<comment type="cofactor">
    <cofactor evidence="2">
        <name>K(+)</name>
        <dbReference type="ChEBI" id="CHEBI:29103"/>
    </cofactor>
</comment>
<comment type="activity regulation">
    <text evidence="2">Mycophenolic acid (MPA) is a non-competitive inhibitor that prevents formation of the closed enzyme conformation by binding to the same site as the amobile flap. In contrast, mizoribine monophosphate (MZP) is a competitive inhibitor that induces the closed conformation. MPA is a potent inhibitor of mammalian IMPDHs but a poor inhibitor of the bacterial enzymes. MZP is a more potent inhibitor of bacterial IMPDH.</text>
</comment>
<comment type="pathway">
    <text evidence="1">Purine metabolism; XMP biosynthesis via de novo pathway; XMP from IMP: step 1/1.</text>
</comment>
<comment type="subunit">
    <text evidence="1">Homotetramer. Interacts with CLOCK; in a circadian manner. Interacts with ANKRD9; leading to its ubiquitination and degradation by the proteasome.</text>
</comment>
<comment type="subcellular location">
    <subcellularLocation>
        <location evidence="1">Cytoplasm</location>
    </subcellularLocation>
    <subcellularLocation>
        <location evidence="1">Nucleus</location>
    </subcellularLocation>
    <subcellularLocation>
        <location evidence="1">Cytoplasm</location>
        <location evidence="1">Cytosol</location>
    </subcellularLocation>
    <text evidence="1">Can form fiber-like subcellular structures termed 'cytoophidia' in response to intracellular guanine-nucleotide depletion.</text>
</comment>
<comment type="PTM">
    <text evidence="1">Acetylated by CLOCK in a circadian manner.</text>
</comment>
<comment type="PTM">
    <text evidence="1">Ubiquitinated leading to its degradation by the proteasome.</text>
</comment>
<comment type="similarity">
    <text evidence="2">Belongs to the IMPDH/GMPR family.</text>
</comment>
<dbReference type="EC" id="1.1.1.205" evidence="1"/>
<dbReference type="RefSeq" id="NP_954530.2">
    <property type="nucleotide sequence ID" value="NM_199099.3"/>
</dbReference>
<dbReference type="SMR" id="E9PU28"/>
<dbReference type="FunCoup" id="E9PU28">
    <property type="interactions" value="2930"/>
</dbReference>
<dbReference type="STRING" id="10116.ENSRNOP00000040635"/>
<dbReference type="iPTMnet" id="E9PU28"/>
<dbReference type="PhosphoSitePlus" id="E9PU28"/>
<dbReference type="jPOST" id="E9PU28"/>
<dbReference type="PaxDb" id="10116-ENSRNOP00000040635"/>
<dbReference type="PeptideAtlas" id="E9PU28"/>
<dbReference type="GeneID" id="301005"/>
<dbReference type="AGR" id="RGD:735092"/>
<dbReference type="RGD" id="735092">
    <property type="gene designation" value="Impdh2"/>
</dbReference>
<dbReference type="VEuPathDB" id="HostDB:ENSRNOG00000031965"/>
<dbReference type="eggNOG" id="KOG2550">
    <property type="taxonomic scope" value="Eukaryota"/>
</dbReference>
<dbReference type="HOGENOM" id="CLU_022552_2_1_1"/>
<dbReference type="InParanoid" id="E9PU28"/>
<dbReference type="PhylomeDB" id="E9PU28"/>
<dbReference type="TreeFam" id="TF300378"/>
<dbReference type="Reactome" id="R-RNO-6798695">
    <property type="pathway name" value="Neutrophil degranulation"/>
</dbReference>
<dbReference type="Reactome" id="R-RNO-73817">
    <property type="pathway name" value="Purine ribonucleoside monophosphate biosynthesis"/>
</dbReference>
<dbReference type="Reactome" id="R-RNO-9748787">
    <property type="pathway name" value="Azathioprine ADME"/>
</dbReference>
<dbReference type="UniPathway" id="UPA00601">
    <property type="reaction ID" value="UER00295"/>
</dbReference>
<dbReference type="PRO" id="PR:E9PU28"/>
<dbReference type="Proteomes" id="UP000002494">
    <property type="component" value="Chromosome 8"/>
</dbReference>
<dbReference type="Bgee" id="ENSRNOG00000031965">
    <property type="expression patterns" value="Expressed in spleen and 20 other cell types or tissues"/>
</dbReference>
<dbReference type="GO" id="GO:0005737">
    <property type="term" value="C:cytoplasm"/>
    <property type="evidence" value="ECO:0000266"/>
    <property type="project" value="RGD"/>
</dbReference>
<dbReference type="GO" id="GO:0005829">
    <property type="term" value="C:cytosol"/>
    <property type="evidence" value="ECO:0000250"/>
    <property type="project" value="UniProtKB"/>
</dbReference>
<dbReference type="GO" id="GO:0005634">
    <property type="term" value="C:nucleus"/>
    <property type="evidence" value="ECO:0000266"/>
    <property type="project" value="RGD"/>
</dbReference>
<dbReference type="GO" id="GO:0042802">
    <property type="term" value="F:identical protein binding"/>
    <property type="evidence" value="ECO:0000353"/>
    <property type="project" value="RGD"/>
</dbReference>
<dbReference type="GO" id="GO:0003938">
    <property type="term" value="F:IMP dehydrogenase activity"/>
    <property type="evidence" value="ECO:0000314"/>
    <property type="project" value="RGD"/>
</dbReference>
<dbReference type="GO" id="GO:0046872">
    <property type="term" value="F:metal ion binding"/>
    <property type="evidence" value="ECO:0007669"/>
    <property type="project" value="UniProtKB-UniRule"/>
</dbReference>
<dbReference type="GO" id="GO:0000166">
    <property type="term" value="F:nucleotide binding"/>
    <property type="evidence" value="ECO:0000266"/>
    <property type="project" value="RGD"/>
</dbReference>
<dbReference type="GO" id="GO:0097294">
    <property type="term" value="P:'de novo' XMP biosynthetic process"/>
    <property type="evidence" value="ECO:0000266"/>
    <property type="project" value="RGD"/>
</dbReference>
<dbReference type="GO" id="GO:0071353">
    <property type="term" value="P:cellular response to interleukin-4"/>
    <property type="evidence" value="ECO:0000266"/>
    <property type="project" value="RGD"/>
</dbReference>
<dbReference type="GO" id="GO:0007623">
    <property type="term" value="P:circadian rhythm"/>
    <property type="evidence" value="ECO:0000250"/>
    <property type="project" value="UniProtKB"/>
</dbReference>
<dbReference type="GO" id="GO:0006177">
    <property type="term" value="P:GMP biosynthetic process"/>
    <property type="evidence" value="ECO:0000266"/>
    <property type="project" value="RGD"/>
</dbReference>
<dbReference type="GO" id="GO:0006183">
    <property type="term" value="P:GTP biosynthetic process"/>
    <property type="evidence" value="ECO:0000250"/>
    <property type="project" value="UniProtKB"/>
</dbReference>
<dbReference type="GO" id="GO:0046651">
    <property type="term" value="P:lymphocyte proliferation"/>
    <property type="evidence" value="ECO:0000266"/>
    <property type="project" value="RGD"/>
</dbReference>
<dbReference type="GO" id="GO:0006164">
    <property type="term" value="P:purine nucleotide biosynthetic process"/>
    <property type="evidence" value="ECO:0000266"/>
    <property type="project" value="RGD"/>
</dbReference>
<dbReference type="GO" id="GO:0060041">
    <property type="term" value="P:retina development in camera-type eye"/>
    <property type="evidence" value="ECO:0000270"/>
    <property type="project" value="RGD"/>
</dbReference>
<dbReference type="CDD" id="cd04601">
    <property type="entry name" value="CBS_pair_IMPDH"/>
    <property type="match status" value="1"/>
</dbReference>
<dbReference type="CDD" id="cd00381">
    <property type="entry name" value="IMPDH"/>
    <property type="match status" value="1"/>
</dbReference>
<dbReference type="FunFam" id="3.20.20.70:FF:000424">
    <property type="entry name" value="Inosine-5'-monophosphate dehydrogenase 2"/>
    <property type="match status" value="2"/>
</dbReference>
<dbReference type="Gene3D" id="3.20.20.70">
    <property type="entry name" value="Aldolase class I"/>
    <property type="match status" value="1"/>
</dbReference>
<dbReference type="HAMAP" id="MF_01964">
    <property type="entry name" value="IMPDH"/>
    <property type="match status" value="1"/>
</dbReference>
<dbReference type="InterPro" id="IPR013785">
    <property type="entry name" value="Aldolase_TIM"/>
</dbReference>
<dbReference type="InterPro" id="IPR000644">
    <property type="entry name" value="CBS_dom"/>
</dbReference>
<dbReference type="InterPro" id="IPR005990">
    <property type="entry name" value="IMP_DH"/>
</dbReference>
<dbReference type="InterPro" id="IPR015875">
    <property type="entry name" value="IMP_DH/GMP_Rdtase_CS"/>
</dbReference>
<dbReference type="InterPro" id="IPR001093">
    <property type="entry name" value="IMP_DH_GMPRt"/>
</dbReference>
<dbReference type="NCBIfam" id="TIGR01302">
    <property type="entry name" value="IMP_dehydrog"/>
    <property type="match status" value="1"/>
</dbReference>
<dbReference type="PANTHER" id="PTHR11911:SF121">
    <property type="entry name" value="INOSINE-5'-MONOPHOSPHATE DEHYDROGENASE 2"/>
    <property type="match status" value="1"/>
</dbReference>
<dbReference type="PANTHER" id="PTHR11911">
    <property type="entry name" value="INOSINE-5-MONOPHOSPHATE DEHYDROGENASE RELATED"/>
    <property type="match status" value="1"/>
</dbReference>
<dbReference type="Pfam" id="PF00571">
    <property type="entry name" value="CBS"/>
    <property type="match status" value="2"/>
</dbReference>
<dbReference type="Pfam" id="PF00478">
    <property type="entry name" value="IMPDH"/>
    <property type="match status" value="1"/>
</dbReference>
<dbReference type="PIRSF" id="PIRSF000130">
    <property type="entry name" value="IMPDH"/>
    <property type="match status" value="1"/>
</dbReference>
<dbReference type="SMART" id="SM00116">
    <property type="entry name" value="CBS"/>
    <property type="match status" value="2"/>
</dbReference>
<dbReference type="SMART" id="SM01240">
    <property type="entry name" value="IMPDH"/>
    <property type="match status" value="1"/>
</dbReference>
<dbReference type="SUPFAM" id="SSF51412">
    <property type="entry name" value="Inosine monophosphate dehydrogenase (IMPDH)"/>
    <property type="match status" value="2"/>
</dbReference>
<dbReference type="PROSITE" id="PS51371">
    <property type="entry name" value="CBS"/>
    <property type="match status" value="2"/>
</dbReference>
<dbReference type="PROSITE" id="PS00487">
    <property type="entry name" value="IMP_DH_GMP_RED"/>
    <property type="match status" value="1"/>
</dbReference>
<reference key="1">
    <citation type="journal article" date="2004" name="Nature">
        <title>Genome sequence of the Brown Norway rat yields insights into mammalian evolution.</title>
        <authorList>
            <person name="Gibbs R.A."/>
            <person name="Weinstock G.M."/>
            <person name="Metzker M.L."/>
            <person name="Muzny D.M."/>
            <person name="Sodergren E.J."/>
            <person name="Scherer S."/>
            <person name="Scott G."/>
            <person name="Steffen D."/>
            <person name="Worley K.C."/>
            <person name="Burch P.E."/>
            <person name="Okwuonu G."/>
            <person name="Hines S."/>
            <person name="Lewis L."/>
            <person name="Deramo C."/>
            <person name="Delgado O."/>
            <person name="Dugan-Rocha S."/>
            <person name="Miner G."/>
            <person name="Morgan M."/>
            <person name="Hawes A."/>
            <person name="Gill R."/>
            <person name="Holt R.A."/>
            <person name="Adams M.D."/>
            <person name="Amanatides P.G."/>
            <person name="Baden-Tillson H."/>
            <person name="Barnstead M."/>
            <person name="Chin S."/>
            <person name="Evans C.A."/>
            <person name="Ferriera S."/>
            <person name="Fosler C."/>
            <person name="Glodek A."/>
            <person name="Gu Z."/>
            <person name="Jennings D."/>
            <person name="Kraft C.L."/>
            <person name="Nguyen T."/>
            <person name="Pfannkoch C.M."/>
            <person name="Sitter C."/>
            <person name="Sutton G.G."/>
            <person name="Venter J.C."/>
            <person name="Woodage T."/>
            <person name="Smith D."/>
            <person name="Lee H.-M."/>
            <person name="Gustafson E."/>
            <person name="Cahill P."/>
            <person name="Kana A."/>
            <person name="Doucette-Stamm L."/>
            <person name="Weinstock K."/>
            <person name="Fechtel K."/>
            <person name="Weiss R.B."/>
            <person name="Dunn D.M."/>
            <person name="Green E.D."/>
            <person name="Blakesley R.W."/>
            <person name="Bouffard G.G."/>
            <person name="De Jong P.J."/>
            <person name="Osoegawa K."/>
            <person name="Zhu B."/>
            <person name="Marra M."/>
            <person name="Schein J."/>
            <person name="Bosdet I."/>
            <person name="Fjell C."/>
            <person name="Jones S."/>
            <person name="Krzywinski M."/>
            <person name="Mathewson C."/>
            <person name="Siddiqui A."/>
            <person name="Wye N."/>
            <person name="McPherson J."/>
            <person name="Zhao S."/>
            <person name="Fraser C.M."/>
            <person name="Shetty J."/>
            <person name="Shatsman S."/>
            <person name="Geer K."/>
            <person name="Chen Y."/>
            <person name="Abramzon S."/>
            <person name="Nierman W.C."/>
            <person name="Havlak P.H."/>
            <person name="Chen R."/>
            <person name="Durbin K.J."/>
            <person name="Egan A."/>
            <person name="Ren Y."/>
            <person name="Song X.-Z."/>
            <person name="Li B."/>
            <person name="Liu Y."/>
            <person name="Qin X."/>
            <person name="Cawley S."/>
            <person name="Cooney A.J."/>
            <person name="D'Souza L.M."/>
            <person name="Martin K."/>
            <person name="Wu J.Q."/>
            <person name="Gonzalez-Garay M.L."/>
            <person name="Jackson A.R."/>
            <person name="Kalafus K.J."/>
            <person name="McLeod M.P."/>
            <person name="Milosavljevic A."/>
            <person name="Virk D."/>
            <person name="Volkov A."/>
            <person name="Wheeler D.A."/>
            <person name="Zhang Z."/>
            <person name="Bailey J.A."/>
            <person name="Eichler E.E."/>
            <person name="Tuzun E."/>
            <person name="Birney E."/>
            <person name="Mongin E."/>
            <person name="Ureta-Vidal A."/>
            <person name="Woodwark C."/>
            <person name="Zdobnov E."/>
            <person name="Bork P."/>
            <person name="Suyama M."/>
            <person name="Torrents D."/>
            <person name="Alexandersson M."/>
            <person name="Trask B.J."/>
            <person name="Young J.M."/>
            <person name="Huang H."/>
            <person name="Wang H."/>
            <person name="Xing H."/>
            <person name="Daniels S."/>
            <person name="Gietzen D."/>
            <person name="Schmidt J."/>
            <person name="Stevens K."/>
            <person name="Vitt U."/>
            <person name="Wingrove J."/>
            <person name="Camara F."/>
            <person name="Mar Alba M."/>
            <person name="Abril J.F."/>
            <person name="Guigo R."/>
            <person name="Smit A."/>
            <person name="Dubchak I."/>
            <person name="Rubin E.M."/>
            <person name="Couronne O."/>
            <person name="Poliakov A."/>
            <person name="Huebner N."/>
            <person name="Ganten D."/>
            <person name="Goesele C."/>
            <person name="Hummel O."/>
            <person name="Kreitler T."/>
            <person name="Lee Y.-A."/>
            <person name="Monti J."/>
            <person name="Schulz H."/>
            <person name="Zimdahl H."/>
            <person name="Himmelbauer H."/>
            <person name="Lehrach H."/>
            <person name="Jacob H.J."/>
            <person name="Bromberg S."/>
            <person name="Gullings-Handley J."/>
            <person name="Jensen-Seaman M.I."/>
            <person name="Kwitek A.E."/>
            <person name="Lazar J."/>
            <person name="Pasko D."/>
            <person name="Tonellato P.J."/>
            <person name="Twigger S."/>
            <person name="Ponting C.P."/>
            <person name="Duarte J.M."/>
            <person name="Rice S."/>
            <person name="Goodstadt L."/>
            <person name="Beatson S.A."/>
            <person name="Emes R.D."/>
            <person name="Winter E.E."/>
            <person name="Webber C."/>
            <person name="Brandt P."/>
            <person name="Nyakatura G."/>
            <person name="Adetobi M."/>
            <person name="Chiaromonte F."/>
            <person name="Elnitski L."/>
            <person name="Eswara P."/>
            <person name="Hardison R.C."/>
            <person name="Hou M."/>
            <person name="Kolbe D."/>
            <person name="Makova K."/>
            <person name="Miller W."/>
            <person name="Nekrutenko A."/>
            <person name="Riemer C."/>
            <person name="Schwartz S."/>
            <person name="Taylor J."/>
            <person name="Yang S."/>
            <person name="Zhang Y."/>
            <person name="Lindpaintner K."/>
            <person name="Andrews T.D."/>
            <person name="Caccamo M."/>
            <person name="Clamp M."/>
            <person name="Clarke L."/>
            <person name="Curwen V."/>
            <person name="Durbin R.M."/>
            <person name="Eyras E."/>
            <person name="Searle S.M."/>
            <person name="Cooper G.M."/>
            <person name="Batzoglou S."/>
            <person name="Brudno M."/>
            <person name="Sidow A."/>
            <person name="Stone E.A."/>
            <person name="Payseur B.A."/>
            <person name="Bourque G."/>
            <person name="Lopez-Otin C."/>
            <person name="Puente X.S."/>
            <person name="Chakrabarti K."/>
            <person name="Chatterji S."/>
            <person name="Dewey C."/>
            <person name="Pachter L."/>
            <person name="Bray N."/>
            <person name="Yap V.B."/>
            <person name="Caspi A."/>
            <person name="Tesler G."/>
            <person name="Pevzner P.A."/>
            <person name="Haussler D."/>
            <person name="Roskin K.M."/>
            <person name="Baertsch R."/>
            <person name="Clawson H."/>
            <person name="Furey T.S."/>
            <person name="Hinrichs A.S."/>
            <person name="Karolchik D."/>
            <person name="Kent W.J."/>
            <person name="Rosenbloom K.R."/>
            <person name="Trumbower H."/>
            <person name="Weirauch M."/>
            <person name="Cooper D.N."/>
            <person name="Stenson P.D."/>
            <person name="Ma B."/>
            <person name="Brent M."/>
            <person name="Arumugam M."/>
            <person name="Shteynberg D."/>
            <person name="Copley R.R."/>
            <person name="Taylor M.S."/>
            <person name="Riethman H."/>
            <person name="Mudunuri U."/>
            <person name="Peterson J."/>
            <person name="Guyer M."/>
            <person name="Felsenfeld A."/>
            <person name="Old S."/>
            <person name="Mockrin S."/>
            <person name="Collins F.S."/>
        </authorList>
    </citation>
    <scope>NUCLEOTIDE SEQUENCE [LARGE SCALE GENOMIC DNA]</scope>
    <source>
        <strain>Brown Norway</strain>
    </source>
</reference>
<reference key="2">
    <citation type="journal article" date="2012" name="Nat. Commun.">
        <title>Quantitative maps of protein phosphorylation sites across 14 different rat organs and tissues.</title>
        <authorList>
            <person name="Lundby A."/>
            <person name="Secher A."/>
            <person name="Lage K."/>
            <person name="Nordsborg N.B."/>
            <person name="Dmytriyev A."/>
            <person name="Lundby C."/>
            <person name="Olsen J.V."/>
        </authorList>
    </citation>
    <scope>PHOSPHORYLATION [LARGE SCALE ANALYSIS] AT SER-416</scope>
    <scope>IDENTIFICATION BY MASS SPECTROMETRY [LARGE SCALE ANALYSIS]</scope>
</reference>
<accession>E9PU28</accession>
<feature type="chain" id="PRO_0000415674" description="Inosine-5'-monophosphate dehydrogenase 2">
    <location>
        <begin position="1"/>
        <end position="514"/>
    </location>
</feature>
<feature type="domain" description="CBS 1" evidence="2">
    <location>
        <begin position="114"/>
        <end position="173"/>
    </location>
</feature>
<feature type="domain" description="CBS 2" evidence="2">
    <location>
        <begin position="179"/>
        <end position="237"/>
    </location>
</feature>
<feature type="active site" description="Thioimidate intermediate" evidence="2">
    <location>
        <position position="331"/>
    </location>
</feature>
<feature type="active site" description="Proton acceptor" evidence="2">
    <location>
        <position position="429"/>
    </location>
</feature>
<feature type="binding site" evidence="2">
    <location>
        <begin position="274"/>
        <end position="276"/>
    </location>
    <ligand>
        <name>NAD(+)</name>
        <dbReference type="ChEBI" id="CHEBI:57540"/>
    </ligand>
</feature>
<feature type="binding site" evidence="2">
    <location>
        <begin position="324"/>
        <end position="326"/>
    </location>
    <ligand>
        <name>NAD(+)</name>
        <dbReference type="ChEBI" id="CHEBI:57540"/>
    </ligand>
</feature>
<feature type="binding site" description="in other chain" evidence="2">
    <location>
        <position position="326"/>
    </location>
    <ligand>
        <name>K(+)</name>
        <dbReference type="ChEBI" id="CHEBI:29103"/>
        <note>ligand shared between two tetrameric partners</note>
    </ligand>
</feature>
<feature type="binding site" description="in other chain" evidence="2">
    <location>
        <position position="328"/>
    </location>
    <ligand>
        <name>K(+)</name>
        <dbReference type="ChEBI" id="CHEBI:29103"/>
        <note>ligand shared between two tetrameric partners</note>
    </ligand>
</feature>
<feature type="binding site" evidence="2">
    <location>
        <position position="329"/>
    </location>
    <ligand>
        <name>IMP</name>
        <dbReference type="ChEBI" id="CHEBI:58053"/>
    </ligand>
</feature>
<feature type="binding site" description="in other chain" evidence="2">
    <location>
        <position position="331"/>
    </location>
    <ligand>
        <name>K(+)</name>
        <dbReference type="ChEBI" id="CHEBI:29103"/>
        <note>ligand shared between two tetrameric partners</note>
    </ligand>
</feature>
<feature type="binding site" evidence="2">
    <location>
        <begin position="364"/>
        <end position="366"/>
    </location>
    <ligand>
        <name>IMP</name>
        <dbReference type="ChEBI" id="CHEBI:58053"/>
    </ligand>
</feature>
<feature type="binding site" evidence="2">
    <location>
        <begin position="387"/>
        <end position="388"/>
    </location>
    <ligand>
        <name>IMP</name>
        <dbReference type="ChEBI" id="CHEBI:58053"/>
    </ligand>
</feature>
<feature type="binding site" evidence="2">
    <location>
        <begin position="411"/>
        <end position="415"/>
    </location>
    <ligand>
        <name>IMP</name>
        <dbReference type="ChEBI" id="CHEBI:58053"/>
    </ligand>
</feature>
<feature type="binding site" evidence="2">
    <location>
        <position position="441"/>
    </location>
    <ligand>
        <name>IMP</name>
        <dbReference type="ChEBI" id="CHEBI:58053"/>
    </ligand>
</feature>
<feature type="binding site" evidence="2">
    <location>
        <position position="500"/>
    </location>
    <ligand>
        <name>K(+)</name>
        <dbReference type="ChEBI" id="CHEBI:29103"/>
        <note>ligand shared between two tetrameric partners</note>
    </ligand>
</feature>
<feature type="binding site" evidence="2">
    <location>
        <position position="501"/>
    </location>
    <ligand>
        <name>K(+)</name>
        <dbReference type="ChEBI" id="CHEBI:29103"/>
        <note>ligand shared between two tetrameric partners</note>
    </ligand>
</feature>
<feature type="binding site" evidence="2">
    <location>
        <position position="502"/>
    </location>
    <ligand>
        <name>K(+)</name>
        <dbReference type="ChEBI" id="CHEBI:29103"/>
        <note>ligand shared between two tetrameric partners</note>
    </ligand>
</feature>
<feature type="modified residue" description="Phosphoserine" evidence="1">
    <location>
        <position position="122"/>
    </location>
</feature>
<feature type="modified residue" description="Phosphoserine" evidence="1">
    <location>
        <position position="160"/>
    </location>
</feature>
<feature type="modified residue" description="Phosphotyrosine" evidence="1">
    <location>
        <position position="400"/>
    </location>
</feature>
<feature type="modified residue" description="Phosphoserine" evidence="3">
    <location>
        <position position="416"/>
    </location>
</feature>
<feature type="modified residue" description="N6-acetyllysine" evidence="1">
    <location>
        <position position="511"/>
    </location>
</feature>
<feature type="cross-link" description="Glycyl lysine isopeptide (Lys-Gly) (interchain with G-Cter in SUMO2)" evidence="1">
    <location>
        <position position="195"/>
    </location>
</feature>
<feature type="cross-link" description="Glycyl lysine isopeptide (Lys-Gly) (interchain with G-Cter in SUMO2)" evidence="1">
    <location>
        <position position="208"/>
    </location>
</feature>
<feature type="cross-link" description="Glycyl lysine isopeptide (Lys-Gly) (interchain with G-Cter in SUMO2)" evidence="1">
    <location>
        <position position="438"/>
    </location>
</feature>
<gene>
    <name type="primary">Impdh2</name>
</gene>
<keyword id="KW-0007">Acetylation</keyword>
<keyword id="KW-0129">CBS domain</keyword>
<keyword id="KW-0963">Cytoplasm</keyword>
<keyword id="KW-0332">GMP biosynthesis</keyword>
<keyword id="KW-1017">Isopeptide bond</keyword>
<keyword id="KW-0479">Metal-binding</keyword>
<keyword id="KW-0520">NAD</keyword>
<keyword id="KW-0539">Nucleus</keyword>
<keyword id="KW-0560">Oxidoreductase</keyword>
<keyword id="KW-0597">Phosphoprotein</keyword>
<keyword id="KW-0630">Potassium</keyword>
<keyword id="KW-0658">Purine biosynthesis</keyword>
<keyword id="KW-1185">Reference proteome</keyword>
<keyword id="KW-0677">Repeat</keyword>
<keyword id="KW-0832">Ubl conjugation</keyword>
<protein>
    <recommendedName>
        <fullName evidence="2">Inosine-5'-monophosphate dehydrogenase 2</fullName>
        <shortName evidence="2">IMP dehydrogenase 2</shortName>
        <shortName evidence="2">IMPD 2</shortName>
        <shortName evidence="2">IMPDH 2</shortName>
        <ecNumber evidence="1">1.1.1.205</ecNumber>
    </recommendedName>
</protein>
<name>IMDH2_RAT</name>